<accession>B9JJJ9</accession>
<protein>
    <recommendedName>
        <fullName evidence="1">N-acetylmuramic acid 6-phosphate etherase</fullName>
        <shortName evidence="1">MurNAc-6-P etherase</shortName>
        <ecNumber evidence="1">4.2.1.126</ecNumber>
    </recommendedName>
    <alternativeName>
        <fullName evidence="1">N-acetylmuramic acid 6-phosphate hydrolase</fullName>
    </alternativeName>
    <alternativeName>
        <fullName evidence="1">N-acetylmuramic acid 6-phosphate lyase</fullName>
    </alternativeName>
</protein>
<feature type="chain" id="PRO_1000118004" description="N-acetylmuramic acid 6-phosphate etherase">
    <location>
        <begin position="1"/>
        <end position="307"/>
    </location>
</feature>
<feature type="domain" description="SIS" evidence="1">
    <location>
        <begin position="62"/>
        <end position="225"/>
    </location>
</feature>
<feature type="active site" description="Proton donor" evidence="1">
    <location>
        <position position="90"/>
    </location>
</feature>
<feature type="active site" evidence="1">
    <location>
        <position position="121"/>
    </location>
</feature>
<comment type="function">
    <text evidence="1">Specifically catalyzes the cleavage of the D-lactyl ether substituent of MurNAc 6-phosphate, producing GlcNAc 6-phosphate and D-lactate. Together with AnmK, is also required for the utilization of anhydro-N-acetylmuramic acid (anhMurNAc) either imported from the medium or derived from its own cell wall murein, and thus plays a role in cell wall recycling.</text>
</comment>
<comment type="catalytic activity">
    <reaction evidence="1">
        <text>N-acetyl-D-muramate 6-phosphate + H2O = N-acetyl-D-glucosamine 6-phosphate + (R)-lactate</text>
        <dbReference type="Rhea" id="RHEA:26410"/>
        <dbReference type="ChEBI" id="CHEBI:15377"/>
        <dbReference type="ChEBI" id="CHEBI:16004"/>
        <dbReference type="ChEBI" id="CHEBI:57513"/>
        <dbReference type="ChEBI" id="CHEBI:58722"/>
        <dbReference type="EC" id="4.2.1.126"/>
    </reaction>
</comment>
<comment type="pathway">
    <text evidence="1">Amino-sugar metabolism; 1,6-anhydro-N-acetylmuramate degradation.</text>
</comment>
<comment type="pathway">
    <text evidence="1">Amino-sugar metabolism; N-acetylmuramate degradation.</text>
</comment>
<comment type="pathway">
    <text evidence="1">Cell wall biogenesis; peptidoglycan recycling.</text>
</comment>
<comment type="subunit">
    <text evidence="1">Homodimer.</text>
</comment>
<comment type="miscellaneous">
    <text evidence="1">A lyase-type mechanism (elimination/hydration) is suggested for the cleavage of the lactyl ether bond of MurNAc 6-phosphate, with the formation of an alpha,beta-unsaturated aldehyde intermediate with (E)-stereochemistry, followed by the syn addition of water to give product.</text>
</comment>
<comment type="similarity">
    <text evidence="1">Belongs to the GCKR-like family. MurNAc-6-P etherase subfamily.</text>
</comment>
<reference key="1">
    <citation type="journal article" date="2009" name="J. Bacteriol.">
        <title>Genome sequences of three Agrobacterium biovars help elucidate the evolution of multichromosome genomes in bacteria.</title>
        <authorList>
            <person name="Slater S.C."/>
            <person name="Goldman B.S."/>
            <person name="Goodner B."/>
            <person name="Setubal J.C."/>
            <person name="Farrand S.K."/>
            <person name="Nester E.W."/>
            <person name="Burr T.J."/>
            <person name="Banta L."/>
            <person name="Dickerman A.W."/>
            <person name="Paulsen I."/>
            <person name="Otten L."/>
            <person name="Suen G."/>
            <person name="Welch R."/>
            <person name="Almeida N.F."/>
            <person name="Arnold F."/>
            <person name="Burton O.T."/>
            <person name="Du Z."/>
            <person name="Ewing A."/>
            <person name="Godsy E."/>
            <person name="Heisel S."/>
            <person name="Houmiel K.L."/>
            <person name="Jhaveri J."/>
            <person name="Lu J."/>
            <person name="Miller N.M."/>
            <person name="Norton S."/>
            <person name="Chen Q."/>
            <person name="Phoolcharoen W."/>
            <person name="Ohlin V."/>
            <person name="Ondrusek D."/>
            <person name="Pride N."/>
            <person name="Stricklin S.L."/>
            <person name="Sun J."/>
            <person name="Wheeler C."/>
            <person name="Wilson L."/>
            <person name="Zhu H."/>
            <person name="Wood D.W."/>
        </authorList>
    </citation>
    <scope>NUCLEOTIDE SEQUENCE [LARGE SCALE GENOMIC DNA]</scope>
    <source>
        <strain>K84 / ATCC BAA-868</strain>
    </source>
</reference>
<proteinExistence type="inferred from homology"/>
<dbReference type="EC" id="4.2.1.126" evidence="1"/>
<dbReference type="EMBL" id="CP000629">
    <property type="protein sequence ID" value="ACM30091.1"/>
    <property type="molecule type" value="Genomic_DNA"/>
</dbReference>
<dbReference type="RefSeq" id="WP_012650312.1">
    <property type="nucleotide sequence ID" value="NC_011983.1"/>
</dbReference>
<dbReference type="SMR" id="B9JJJ9"/>
<dbReference type="STRING" id="311403.Arad_8937"/>
<dbReference type="GeneID" id="86852462"/>
<dbReference type="KEGG" id="ara:Arad_8937"/>
<dbReference type="eggNOG" id="COG2103">
    <property type="taxonomic scope" value="Bacteria"/>
</dbReference>
<dbReference type="HOGENOM" id="CLU_049049_1_1_5"/>
<dbReference type="UniPathway" id="UPA00342"/>
<dbReference type="UniPathway" id="UPA00343"/>
<dbReference type="UniPathway" id="UPA00544"/>
<dbReference type="Proteomes" id="UP000001600">
    <property type="component" value="Chromosome 2"/>
</dbReference>
<dbReference type="GO" id="GO:0097367">
    <property type="term" value="F:carbohydrate derivative binding"/>
    <property type="evidence" value="ECO:0007669"/>
    <property type="project" value="InterPro"/>
</dbReference>
<dbReference type="GO" id="GO:0016835">
    <property type="term" value="F:carbon-oxygen lyase activity"/>
    <property type="evidence" value="ECO:0007669"/>
    <property type="project" value="UniProtKB-UniRule"/>
</dbReference>
<dbReference type="GO" id="GO:0016803">
    <property type="term" value="F:ether hydrolase activity"/>
    <property type="evidence" value="ECO:0007669"/>
    <property type="project" value="TreeGrafter"/>
</dbReference>
<dbReference type="GO" id="GO:0097175">
    <property type="term" value="P:1,6-anhydro-N-acetyl-beta-muramic acid catabolic process"/>
    <property type="evidence" value="ECO:0007669"/>
    <property type="project" value="UniProtKB-UniRule"/>
</dbReference>
<dbReference type="GO" id="GO:0046348">
    <property type="term" value="P:amino sugar catabolic process"/>
    <property type="evidence" value="ECO:0007669"/>
    <property type="project" value="InterPro"/>
</dbReference>
<dbReference type="GO" id="GO:0097173">
    <property type="term" value="P:N-acetylmuramic acid catabolic process"/>
    <property type="evidence" value="ECO:0007669"/>
    <property type="project" value="UniProtKB-UniPathway"/>
</dbReference>
<dbReference type="GO" id="GO:0009254">
    <property type="term" value="P:peptidoglycan turnover"/>
    <property type="evidence" value="ECO:0007669"/>
    <property type="project" value="UniProtKB-UniRule"/>
</dbReference>
<dbReference type="CDD" id="cd05007">
    <property type="entry name" value="SIS_Etherase"/>
    <property type="match status" value="1"/>
</dbReference>
<dbReference type="FunFam" id="1.10.8.1080:FF:000001">
    <property type="entry name" value="N-acetylmuramic acid 6-phosphate etherase"/>
    <property type="match status" value="1"/>
</dbReference>
<dbReference type="FunFam" id="3.40.50.10490:FF:000014">
    <property type="entry name" value="N-acetylmuramic acid 6-phosphate etherase"/>
    <property type="match status" value="1"/>
</dbReference>
<dbReference type="Gene3D" id="1.10.8.1080">
    <property type="match status" value="1"/>
</dbReference>
<dbReference type="Gene3D" id="3.40.50.10490">
    <property type="entry name" value="Glucose-6-phosphate isomerase like protein, domain 1"/>
    <property type="match status" value="1"/>
</dbReference>
<dbReference type="HAMAP" id="MF_00068">
    <property type="entry name" value="MurQ"/>
    <property type="match status" value="1"/>
</dbReference>
<dbReference type="InterPro" id="IPR005488">
    <property type="entry name" value="Etherase_MurQ"/>
</dbReference>
<dbReference type="InterPro" id="IPR005486">
    <property type="entry name" value="Glucokinase_regulatory_CS"/>
</dbReference>
<dbReference type="InterPro" id="IPR040190">
    <property type="entry name" value="MURQ/GCKR"/>
</dbReference>
<dbReference type="InterPro" id="IPR001347">
    <property type="entry name" value="SIS_dom"/>
</dbReference>
<dbReference type="InterPro" id="IPR046348">
    <property type="entry name" value="SIS_dom_sf"/>
</dbReference>
<dbReference type="NCBIfam" id="TIGR00274">
    <property type="entry name" value="N-acetylmuramic acid 6-phosphate etherase"/>
    <property type="match status" value="1"/>
</dbReference>
<dbReference type="NCBIfam" id="NF003915">
    <property type="entry name" value="PRK05441.1"/>
    <property type="match status" value="1"/>
</dbReference>
<dbReference type="NCBIfam" id="NF009222">
    <property type="entry name" value="PRK12570.1"/>
    <property type="match status" value="1"/>
</dbReference>
<dbReference type="PANTHER" id="PTHR10088">
    <property type="entry name" value="GLUCOKINASE REGULATORY PROTEIN"/>
    <property type="match status" value="1"/>
</dbReference>
<dbReference type="PANTHER" id="PTHR10088:SF5">
    <property type="entry name" value="N-ACETYLMURAMIC ACID 6-PHOSPHATE ETHERASE"/>
    <property type="match status" value="1"/>
</dbReference>
<dbReference type="Pfam" id="PF20741">
    <property type="entry name" value="GKRP-like_C"/>
    <property type="match status" value="1"/>
</dbReference>
<dbReference type="Pfam" id="PF22645">
    <property type="entry name" value="GKRP_SIS_N"/>
    <property type="match status" value="1"/>
</dbReference>
<dbReference type="SUPFAM" id="SSF53697">
    <property type="entry name" value="SIS domain"/>
    <property type="match status" value="1"/>
</dbReference>
<dbReference type="PROSITE" id="PS01272">
    <property type="entry name" value="GCKR"/>
    <property type="match status" value="1"/>
</dbReference>
<dbReference type="PROSITE" id="PS51464">
    <property type="entry name" value="SIS"/>
    <property type="match status" value="1"/>
</dbReference>
<name>MURQ_RHIR8</name>
<gene>
    <name evidence="1" type="primary">murQ</name>
    <name type="ordered locus">Arad_8937</name>
</gene>
<sequence>MTEQRLISELEQLVSEGRNPNTMHIDLLPTFDILREINYEDQTVPTAVEKVIPAIAAAVNQIVAAFQKGGRLIYMGAGTSGRLGVLDASECPPTFSVPSDMVIGLIAGGPEALQNSIEGAEDDPEQGRQALQDIKLTSTDVVVGIAVSGRTPYVIGGLNYAKSIGAVTIALSCNPNSIIAGIADLAISPVVGPEILTGSTRLKSGTAQKLILNMLTTASMIRIGKSYQNLMVDVHASNKKLVARAIRIVMQATGCTQADARRVLDQTGNDVKLAILMEITGMGIEEARAALQNAGGFLRKAISAKTA</sequence>
<organism>
    <name type="scientific">Rhizobium rhizogenes (strain K84 / ATCC BAA-868)</name>
    <name type="common">Agrobacterium radiobacter</name>
    <dbReference type="NCBI Taxonomy" id="311403"/>
    <lineage>
        <taxon>Bacteria</taxon>
        <taxon>Pseudomonadati</taxon>
        <taxon>Pseudomonadota</taxon>
        <taxon>Alphaproteobacteria</taxon>
        <taxon>Hyphomicrobiales</taxon>
        <taxon>Rhizobiaceae</taxon>
        <taxon>Rhizobium/Agrobacterium group</taxon>
        <taxon>Rhizobium</taxon>
    </lineage>
</organism>
<evidence type="ECO:0000255" key="1">
    <source>
        <dbReference type="HAMAP-Rule" id="MF_00068"/>
    </source>
</evidence>
<keyword id="KW-0119">Carbohydrate metabolism</keyword>
<keyword id="KW-0456">Lyase</keyword>